<dbReference type="EMBL" id="CM003142">
    <property type="protein sequence ID" value="KIS70332.1"/>
    <property type="molecule type" value="Genomic_DNA"/>
</dbReference>
<dbReference type="RefSeq" id="XP_011387544.1">
    <property type="nucleotide sequence ID" value="XM_011389242.1"/>
</dbReference>
<dbReference type="SMR" id="Q4PEF9"/>
<dbReference type="FunCoup" id="Q4PEF9">
    <property type="interactions" value="178"/>
</dbReference>
<dbReference type="STRING" id="237631.Q4PEF9"/>
<dbReference type="EnsemblFungi" id="KIS70332">
    <property type="protein sequence ID" value="KIS70332"/>
    <property type="gene ID" value="UMAG_01504"/>
</dbReference>
<dbReference type="GeneID" id="23562492"/>
<dbReference type="KEGG" id="uma:UMAG_01504"/>
<dbReference type="VEuPathDB" id="FungiDB:UMAG_01504"/>
<dbReference type="eggNOG" id="KOG1756">
    <property type="taxonomic scope" value="Eukaryota"/>
</dbReference>
<dbReference type="HOGENOM" id="CLU_062828_3_1_1"/>
<dbReference type="InParanoid" id="Q4PEF9"/>
<dbReference type="OMA" id="CALESQH"/>
<dbReference type="OrthoDB" id="9421954at2759"/>
<dbReference type="Proteomes" id="UP000000561">
    <property type="component" value="Chromosome 3"/>
</dbReference>
<dbReference type="GO" id="GO:0000786">
    <property type="term" value="C:nucleosome"/>
    <property type="evidence" value="ECO:0000318"/>
    <property type="project" value="GO_Central"/>
</dbReference>
<dbReference type="GO" id="GO:0005634">
    <property type="term" value="C:nucleus"/>
    <property type="evidence" value="ECO:0000318"/>
    <property type="project" value="GO_Central"/>
</dbReference>
<dbReference type="GO" id="GO:0003677">
    <property type="term" value="F:DNA binding"/>
    <property type="evidence" value="ECO:0007669"/>
    <property type="project" value="UniProtKB-KW"/>
</dbReference>
<dbReference type="GO" id="GO:0046982">
    <property type="term" value="F:protein heterodimerization activity"/>
    <property type="evidence" value="ECO:0007669"/>
    <property type="project" value="InterPro"/>
</dbReference>
<dbReference type="GO" id="GO:0030527">
    <property type="term" value="F:structural constituent of chromatin"/>
    <property type="evidence" value="ECO:0000318"/>
    <property type="project" value="GO_Central"/>
</dbReference>
<dbReference type="GO" id="GO:0006281">
    <property type="term" value="P:DNA repair"/>
    <property type="evidence" value="ECO:0007669"/>
    <property type="project" value="UniProtKB-KW"/>
</dbReference>
<dbReference type="GO" id="GO:0031507">
    <property type="term" value="P:heterochromatin formation"/>
    <property type="evidence" value="ECO:0000318"/>
    <property type="project" value="GO_Central"/>
</dbReference>
<dbReference type="CDD" id="cd00074">
    <property type="entry name" value="HFD_H2A"/>
    <property type="match status" value="1"/>
</dbReference>
<dbReference type="FunFam" id="1.10.20.10:FF:000008">
    <property type="entry name" value="Histone H2A"/>
    <property type="match status" value="1"/>
</dbReference>
<dbReference type="Gene3D" id="1.10.20.10">
    <property type="entry name" value="Histone, subunit A"/>
    <property type="match status" value="1"/>
</dbReference>
<dbReference type="InterPro" id="IPR009072">
    <property type="entry name" value="Histone-fold"/>
</dbReference>
<dbReference type="InterPro" id="IPR002119">
    <property type="entry name" value="Histone_H2A"/>
</dbReference>
<dbReference type="InterPro" id="IPR007125">
    <property type="entry name" value="Histone_H2A/H2B/H3"/>
</dbReference>
<dbReference type="InterPro" id="IPR032454">
    <property type="entry name" value="Histone_H2A_C"/>
</dbReference>
<dbReference type="InterPro" id="IPR032458">
    <property type="entry name" value="Histone_H2A_CS"/>
</dbReference>
<dbReference type="PANTHER" id="PTHR23430">
    <property type="entry name" value="HISTONE H2A"/>
    <property type="match status" value="1"/>
</dbReference>
<dbReference type="Pfam" id="PF00125">
    <property type="entry name" value="Histone"/>
    <property type="match status" value="1"/>
</dbReference>
<dbReference type="Pfam" id="PF16211">
    <property type="entry name" value="Histone_H2A_C"/>
    <property type="match status" value="1"/>
</dbReference>
<dbReference type="PRINTS" id="PR00620">
    <property type="entry name" value="HISTONEH2A"/>
</dbReference>
<dbReference type="SMART" id="SM00414">
    <property type="entry name" value="H2A"/>
    <property type="match status" value="1"/>
</dbReference>
<dbReference type="SUPFAM" id="SSF47113">
    <property type="entry name" value="Histone-fold"/>
    <property type="match status" value="1"/>
</dbReference>
<dbReference type="PROSITE" id="PS00046">
    <property type="entry name" value="HISTONE_H2A"/>
    <property type="match status" value="1"/>
</dbReference>
<accession>Q4PEF9</accession>
<accession>A0A0D1CAG2</accession>
<organism>
    <name type="scientific">Mycosarcoma maydis</name>
    <name type="common">Corn smut fungus</name>
    <name type="synonym">Ustilago maydis</name>
    <dbReference type="NCBI Taxonomy" id="5270"/>
    <lineage>
        <taxon>Eukaryota</taxon>
        <taxon>Fungi</taxon>
        <taxon>Dikarya</taxon>
        <taxon>Basidiomycota</taxon>
        <taxon>Ustilaginomycotina</taxon>
        <taxon>Ustilaginomycetes</taxon>
        <taxon>Ustilaginales</taxon>
        <taxon>Ustilaginaceae</taxon>
        <taxon>Mycosarcoma</taxon>
    </lineage>
</organism>
<sequence>MSSGGKSGGKAGDASSKAQSRSAKAGLQFPVGRIHRLLRKGNYAQRVGAGAPVYLAAVLEYLAAEILELAGNAARDNKKSRIIPRHLQLAIRNDEELNKLLGGVTISQGGVLPFIQSELLPAKSGKPKKAGGSQDI</sequence>
<keyword id="KW-0007">Acetylation</keyword>
<keyword id="KW-0158">Chromosome</keyword>
<keyword id="KW-0227">DNA damage</keyword>
<keyword id="KW-0234">DNA repair</keyword>
<keyword id="KW-0238">DNA-binding</keyword>
<keyword id="KW-0488">Methylation</keyword>
<keyword id="KW-0544">Nucleosome core</keyword>
<keyword id="KW-0539">Nucleus</keyword>
<keyword id="KW-0597">Phosphoprotein</keyword>
<keyword id="KW-1185">Reference proteome</keyword>
<gene>
    <name type="primary">HTA1</name>
    <name type="ORF">UMAG_01504</name>
</gene>
<proteinExistence type="inferred from homology"/>
<evidence type="ECO:0000250" key="1"/>
<evidence type="ECO:0000256" key="2">
    <source>
        <dbReference type="SAM" id="MobiDB-lite"/>
    </source>
</evidence>
<evidence type="ECO:0000305" key="3"/>
<comment type="function">
    <text>Core component of nucleosome which plays a central role in DNA double strand break (DSB) repair. Nucleosomes wrap and compact DNA into chromatin, limiting DNA accessibility to the cellular machineries which require DNA as a template. Histones thereby play a central role in transcription regulation, DNA repair, DNA replication and chromosomal stability. DNA accessibility is regulated via a complex set of post-translational modifications of histones, also called histone code, and nucleosome remodeling.</text>
</comment>
<comment type="subunit">
    <text>The nucleosome is a histone octamer containing two molecules each of H2A, H2B, H3 and H4 assembled in one H3-H4 heterotetramer and two H2A-H2B heterodimers. The octamer wraps approximately 147 bp of DNA.</text>
</comment>
<comment type="subcellular location">
    <subcellularLocation>
        <location evidence="1">Nucleus</location>
    </subcellularLocation>
    <subcellularLocation>
        <location evidence="1">Chromosome</location>
    </subcellularLocation>
</comment>
<comment type="domain">
    <text>The [ST]-Q motif constitutes a recognition sequence for kinases from the PI3/PI4-kinase family.</text>
</comment>
<comment type="PTM">
    <text evidence="1">Phosphorylated to form H2AS128ph (gamma-H2A) in response to DNA double-strand breaks (DSBs) generated by exogenous genotoxic agents and by stalled replication forks. Phosphorylation is dependent on the DNA damage checkpoint kinases MEC1/ATR and TEL1/ATM, spreads on either side of a detected DSB site and may mark the surrounding chromatin for recruitment of proteins required for DNA damage signaling and repair. Gamma-H2A is removed from the DNA prior to the strand invasion-primer extension step of the repair process and subsequently dephosphorylated. Dephosphorylation is necessary for efficient recovery from the DNA damage checkpoint (By similarity).</text>
</comment>
<comment type="PTM">
    <text evidence="1">Acetylated by ESA1 to form H2AK4ac and H2AK7ac.</text>
</comment>
<comment type="miscellaneous">
    <text evidence="3">In contrast to vertebrates and insects, its C-terminus is not monoubiquitinated.</text>
</comment>
<comment type="similarity">
    <text evidence="3">Belongs to the histone H2A family.</text>
</comment>
<comment type="caution">
    <text evidence="3">To ensure consistency between histone entries, we follow the 'Brno' nomenclature for histone modifications, with positions referring to those used in the literature for the 'closest' model organism. Due to slight variations in histone sequences between organisms and to the presence of initiator methionine in UniProtKB/Swiss-Prot sequences, the actual positions of modified amino acids in the sequence generally differ. In this entry the following conventions are used: H2AK4ac = acetylated Lys-6; H2AK7ac = acetylated Lys-10; H2AS128ph = phosphorylated Ser-133.</text>
</comment>
<name>H2A_MYCMD</name>
<protein>
    <recommendedName>
        <fullName>Histone H2A</fullName>
    </recommendedName>
</protein>
<reference key="1">
    <citation type="journal article" date="2006" name="Nature">
        <title>Insights from the genome of the biotrophic fungal plant pathogen Ustilago maydis.</title>
        <authorList>
            <person name="Kaemper J."/>
            <person name="Kahmann R."/>
            <person name="Boelker M."/>
            <person name="Ma L.-J."/>
            <person name="Brefort T."/>
            <person name="Saville B.J."/>
            <person name="Banuett F."/>
            <person name="Kronstad J.W."/>
            <person name="Gold S.E."/>
            <person name="Mueller O."/>
            <person name="Perlin M.H."/>
            <person name="Woesten H.A.B."/>
            <person name="de Vries R."/>
            <person name="Ruiz-Herrera J."/>
            <person name="Reynaga-Pena C.G."/>
            <person name="Snetselaar K."/>
            <person name="McCann M."/>
            <person name="Perez-Martin J."/>
            <person name="Feldbruegge M."/>
            <person name="Basse C.W."/>
            <person name="Steinberg G."/>
            <person name="Ibeas J.I."/>
            <person name="Holloman W."/>
            <person name="Guzman P."/>
            <person name="Farman M.L."/>
            <person name="Stajich J.E."/>
            <person name="Sentandreu R."/>
            <person name="Gonzalez-Prieto J.M."/>
            <person name="Kennell J.C."/>
            <person name="Molina L."/>
            <person name="Schirawski J."/>
            <person name="Mendoza-Mendoza A."/>
            <person name="Greilinger D."/>
            <person name="Muench K."/>
            <person name="Roessel N."/>
            <person name="Scherer M."/>
            <person name="Vranes M."/>
            <person name="Ladendorf O."/>
            <person name="Vincon V."/>
            <person name="Fuchs U."/>
            <person name="Sandrock B."/>
            <person name="Meng S."/>
            <person name="Ho E.C.H."/>
            <person name="Cahill M.J."/>
            <person name="Boyce K.J."/>
            <person name="Klose J."/>
            <person name="Klosterman S.J."/>
            <person name="Deelstra H.J."/>
            <person name="Ortiz-Castellanos L."/>
            <person name="Li W."/>
            <person name="Sanchez-Alonso P."/>
            <person name="Schreier P.H."/>
            <person name="Haeuser-Hahn I."/>
            <person name="Vaupel M."/>
            <person name="Koopmann E."/>
            <person name="Friedrich G."/>
            <person name="Voss H."/>
            <person name="Schlueter T."/>
            <person name="Margolis J."/>
            <person name="Platt D."/>
            <person name="Swimmer C."/>
            <person name="Gnirke A."/>
            <person name="Chen F."/>
            <person name="Vysotskaia V."/>
            <person name="Mannhaupt G."/>
            <person name="Gueldener U."/>
            <person name="Muensterkoetter M."/>
            <person name="Haase D."/>
            <person name="Oesterheld M."/>
            <person name="Mewes H.-W."/>
            <person name="Mauceli E.W."/>
            <person name="DeCaprio D."/>
            <person name="Wade C.M."/>
            <person name="Butler J."/>
            <person name="Young S.K."/>
            <person name="Jaffe D.B."/>
            <person name="Calvo S.E."/>
            <person name="Nusbaum C."/>
            <person name="Galagan J.E."/>
            <person name="Birren B.W."/>
        </authorList>
    </citation>
    <scope>NUCLEOTIDE SEQUENCE [LARGE SCALE GENOMIC DNA]</scope>
    <source>
        <strain>DSM 14603 / FGSC 9021 / UM521</strain>
    </source>
</reference>
<reference key="2">
    <citation type="submission" date="2014-09" db="EMBL/GenBank/DDBJ databases">
        <authorList>
            <person name="Gueldener U."/>
            <person name="Muensterkoetter M."/>
            <person name="Walter M.C."/>
            <person name="Mannhaupt G."/>
            <person name="Kahmann R."/>
        </authorList>
    </citation>
    <scope>GENOME REANNOTATION</scope>
    <source>
        <strain>DSM 14603 / FGSC 9021 / UM521</strain>
    </source>
</reference>
<feature type="initiator methionine" description="Removed" evidence="1">
    <location>
        <position position="1"/>
    </location>
</feature>
<feature type="chain" id="PRO_0000228734" description="Histone H2A">
    <location>
        <begin position="2"/>
        <end position="136"/>
    </location>
</feature>
<feature type="region of interest" description="Disordered" evidence="2">
    <location>
        <begin position="1"/>
        <end position="24"/>
    </location>
</feature>
<feature type="short sequence motif" description="[ST]-Q motif">
    <location>
        <begin position="133"/>
        <end position="134"/>
    </location>
</feature>
<feature type="compositionally biased region" description="Gly residues" evidence="2">
    <location>
        <begin position="1"/>
        <end position="11"/>
    </location>
</feature>
<feature type="compositionally biased region" description="Low complexity" evidence="2">
    <location>
        <begin position="12"/>
        <end position="24"/>
    </location>
</feature>
<feature type="modified residue" description="N6-acetyllysine" evidence="1">
    <location>
        <position position="6"/>
    </location>
</feature>
<feature type="modified residue" description="N6-acetyllysine" evidence="1">
    <location>
        <position position="10"/>
    </location>
</feature>
<feature type="modified residue" description="N5-methylglutamine" evidence="1">
    <location>
        <position position="108"/>
    </location>
</feature>
<feature type="modified residue" description="Phosphoserine" evidence="1">
    <location>
        <position position="133"/>
    </location>
</feature>